<protein>
    <recommendedName>
        <fullName>SWR1-complex protein 4</fullName>
    </recommendedName>
</protein>
<gene>
    <name type="primary">SWC4</name>
    <name type="ordered locus">CNE05140</name>
</gene>
<comment type="function">
    <text evidence="1">Component of the SWR1 complex which mediates the ATP-dependent exchange of histone H2A for the H2A variant HZT1 leading to transcriptional regulation of selected genes by chromatin remodeling. Component of the NuA4 histone acetyltransferase complex which is involved in transcriptional activation of selected genes principally by acetylation of nucleosomal histone H4 and H2A. The NuA4 complex is also involved in DNA repair (By similarity).</text>
</comment>
<comment type="subunit">
    <text evidence="1">Component of the SWR1 chromatin-remodeling complex and of the NuA4 histone acetyltransferase complex.</text>
</comment>
<comment type="subcellular location">
    <subcellularLocation>
        <location evidence="1">Nucleus</location>
    </subcellularLocation>
</comment>
<comment type="similarity">
    <text evidence="3">Belongs to the SWC4 family.</text>
</comment>
<name>SWC4_CRYNJ</name>
<accession>P0CO96</accession>
<accession>Q55RL7</accession>
<accession>Q5KG22</accession>
<proteinExistence type="inferred from homology"/>
<organism>
    <name type="scientific">Cryptococcus neoformans var. neoformans serotype D (strain JEC21 / ATCC MYA-565)</name>
    <name type="common">Filobasidiella neoformans</name>
    <dbReference type="NCBI Taxonomy" id="214684"/>
    <lineage>
        <taxon>Eukaryota</taxon>
        <taxon>Fungi</taxon>
        <taxon>Dikarya</taxon>
        <taxon>Basidiomycota</taxon>
        <taxon>Agaricomycotina</taxon>
        <taxon>Tremellomycetes</taxon>
        <taxon>Tremellales</taxon>
        <taxon>Cryptococcaceae</taxon>
        <taxon>Cryptococcus</taxon>
        <taxon>Cryptococcus neoformans species complex</taxon>
    </lineage>
</organism>
<feature type="chain" id="PRO_0000076339" description="SWR1-complex protein 4">
    <location>
        <begin position="1"/>
        <end position="463"/>
    </location>
</feature>
<feature type="domain" description="SANT">
    <location>
        <begin position="130"/>
        <end position="189"/>
    </location>
</feature>
<feature type="region of interest" description="Disordered" evidence="2">
    <location>
        <begin position="1"/>
        <end position="32"/>
    </location>
</feature>
<feature type="region of interest" description="Disordered" evidence="2">
    <location>
        <begin position="285"/>
        <end position="359"/>
    </location>
</feature>
<feature type="compositionally biased region" description="Low complexity" evidence="2">
    <location>
        <begin position="10"/>
        <end position="24"/>
    </location>
</feature>
<feature type="compositionally biased region" description="Polar residues" evidence="2">
    <location>
        <begin position="330"/>
        <end position="341"/>
    </location>
</feature>
<dbReference type="EMBL" id="AE017345">
    <property type="protein sequence ID" value="AAW43735.1"/>
    <property type="molecule type" value="Genomic_DNA"/>
</dbReference>
<dbReference type="RefSeq" id="XP_571042.1">
    <property type="nucleotide sequence ID" value="XM_571042.1"/>
</dbReference>
<dbReference type="SMR" id="P0CO96"/>
<dbReference type="FunCoup" id="P0CO96">
    <property type="interactions" value="570"/>
</dbReference>
<dbReference type="STRING" id="214684.P0CO96"/>
<dbReference type="PaxDb" id="214684-P0CO96"/>
<dbReference type="EnsemblFungi" id="AAW43735">
    <property type="protein sequence ID" value="AAW43735"/>
    <property type="gene ID" value="CNE05140"/>
</dbReference>
<dbReference type="GeneID" id="3257530"/>
<dbReference type="KEGG" id="cne:CNE05140"/>
<dbReference type="VEuPathDB" id="FungiDB:CNE05140"/>
<dbReference type="eggNOG" id="KOG2656">
    <property type="taxonomic scope" value="Eukaryota"/>
</dbReference>
<dbReference type="HOGENOM" id="CLU_018539_4_1_1"/>
<dbReference type="InParanoid" id="P0CO96"/>
<dbReference type="OMA" id="GNTTMYQ"/>
<dbReference type="OrthoDB" id="19740at2759"/>
<dbReference type="Proteomes" id="UP000002149">
    <property type="component" value="Chromosome 5"/>
</dbReference>
<dbReference type="GO" id="GO:0035267">
    <property type="term" value="C:NuA4 histone acetyltransferase complex"/>
    <property type="evidence" value="ECO:0000318"/>
    <property type="project" value="GO_Central"/>
</dbReference>
<dbReference type="GO" id="GO:0000812">
    <property type="term" value="C:Swr1 complex"/>
    <property type="evidence" value="ECO:0000318"/>
    <property type="project" value="GO_Central"/>
</dbReference>
<dbReference type="GO" id="GO:0003714">
    <property type="term" value="F:transcription corepressor activity"/>
    <property type="evidence" value="ECO:0000318"/>
    <property type="project" value="GO_Central"/>
</dbReference>
<dbReference type="GO" id="GO:0006338">
    <property type="term" value="P:chromatin remodeling"/>
    <property type="evidence" value="ECO:0007669"/>
    <property type="project" value="InterPro"/>
</dbReference>
<dbReference type="GO" id="GO:0006281">
    <property type="term" value="P:DNA repair"/>
    <property type="evidence" value="ECO:0007669"/>
    <property type="project" value="UniProtKB-KW"/>
</dbReference>
<dbReference type="GO" id="GO:0000122">
    <property type="term" value="P:negative regulation of transcription by RNA polymerase II"/>
    <property type="evidence" value="ECO:0000318"/>
    <property type="project" value="GO_Central"/>
</dbReference>
<dbReference type="FunFam" id="1.10.10.60:FF:000501">
    <property type="entry name" value="Unplaced genomic scaffold supercont1.172, whole genome shotgun sequence"/>
    <property type="match status" value="1"/>
</dbReference>
<dbReference type="Gene3D" id="1.10.10.60">
    <property type="entry name" value="Homeodomain-like"/>
    <property type="match status" value="1"/>
</dbReference>
<dbReference type="InterPro" id="IPR032563">
    <property type="entry name" value="DAMP1_SANT-like"/>
</dbReference>
<dbReference type="InterPro" id="IPR027109">
    <property type="entry name" value="Swc4/Dmap1"/>
</dbReference>
<dbReference type="PANTHER" id="PTHR12855:SF10">
    <property type="entry name" value="DNA METHYLTRANSFERASE 1-ASSOCIATED PROTEIN 1"/>
    <property type="match status" value="1"/>
</dbReference>
<dbReference type="PANTHER" id="PTHR12855">
    <property type="entry name" value="DNA METHYLTRANSFERASE 1-ASSOCIATED PROTEIN 1 FAMILY MEMBER"/>
    <property type="match status" value="1"/>
</dbReference>
<dbReference type="Pfam" id="PF16282">
    <property type="entry name" value="SANT_DAMP1_like"/>
    <property type="match status" value="1"/>
</dbReference>
<evidence type="ECO:0000250" key="1"/>
<evidence type="ECO:0000256" key="2">
    <source>
        <dbReference type="SAM" id="MobiDB-lite"/>
    </source>
</evidence>
<evidence type="ECO:0000305" key="3"/>
<sequence>MSAQDVRSILSLPPSTPLPTLSSSKKVPVPRKPDGITRELYALIGDNAPSLADAQASLAAVKYREKPALKGKKVHWEWTKFTPAARRDNPVRLGHWARITDSDPNDSVEYFGKFNLHGPSVMEYSQFEYDQHLVDPNWTLQETEYLFELLKEYDLRFIVAADRYAYVSPEGEKRKRSVEDMKDRYYTICRRLIRTRTASDPVHQQHLIQAYAFDKAREIKRKQYASDLFHLTPAEIAEEEALYVEITRMQQNERRFRADRDELMRSVMGLDSGLVEVDQSAMENAIGVDKNKKKRKAEDESAAPSPAPTPKKPAPNAGFDNSRCIYHLPTPSNANSLTSHLSQKHPPHQQAFLRGSRLPLPKPTAAGRITDLLAELGLSANRLVMPTRQNMEVFEGLLNAAAALVEMRRQVNRVEQELRVVRMQKEGLMPVTTNPSARVKGEAGVVTGGSEATVKAVTPVKEC</sequence>
<reference key="1">
    <citation type="journal article" date="2005" name="Science">
        <title>The genome of the basidiomycetous yeast and human pathogen Cryptococcus neoformans.</title>
        <authorList>
            <person name="Loftus B.J."/>
            <person name="Fung E."/>
            <person name="Roncaglia P."/>
            <person name="Rowley D."/>
            <person name="Amedeo P."/>
            <person name="Bruno D."/>
            <person name="Vamathevan J."/>
            <person name="Miranda M."/>
            <person name="Anderson I.J."/>
            <person name="Fraser J.A."/>
            <person name="Allen J.E."/>
            <person name="Bosdet I.E."/>
            <person name="Brent M.R."/>
            <person name="Chiu R."/>
            <person name="Doering T.L."/>
            <person name="Donlin M.J."/>
            <person name="D'Souza C.A."/>
            <person name="Fox D.S."/>
            <person name="Grinberg V."/>
            <person name="Fu J."/>
            <person name="Fukushima M."/>
            <person name="Haas B.J."/>
            <person name="Huang J.C."/>
            <person name="Janbon G."/>
            <person name="Jones S.J.M."/>
            <person name="Koo H.L."/>
            <person name="Krzywinski M.I."/>
            <person name="Kwon-Chung K.J."/>
            <person name="Lengeler K.B."/>
            <person name="Maiti R."/>
            <person name="Marra M.A."/>
            <person name="Marra R.E."/>
            <person name="Mathewson C.A."/>
            <person name="Mitchell T.G."/>
            <person name="Pertea M."/>
            <person name="Riggs F.R."/>
            <person name="Salzberg S.L."/>
            <person name="Schein J.E."/>
            <person name="Shvartsbeyn A."/>
            <person name="Shin H."/>
            <person name="Shumway M."/>
            <person name="Specht C.A."/>
            <person name="Suh B.B."/>
            <person name="Tenney A."/>
            <person name="Utterback T.R."/>
            <person name="Wickes B.L."/>
            <person name="Wortman J.R."/>
            <person name="Wye N.H."/>
            <person name="Kronstad J.W."/>
            <person name="Lodge J.K."/>
            <person name="Heitman J."/>
            <person name="Davis R.W."/>
            <person name="Fraser C.M."/>
            <person name="Hyman R.W."/>
        </authorList>
    </citation>
    <scope>NUCLEOTIDE SEQUENCE [LARGE SCALE GENOMIC DNA]</scope>
    <source>
        <strain>JEC21 / ATCC MYA-565</strain>
    </source>
</reference>
<keyword id="KW-0010">Activator</keyword>
<keyword id="KW-0156">Chromatin regulator</keyword>
<keyword id="KW-0227">DNA damage</keyword>
<keyword id="KW-0234">DNA repair</keyword>
<keyword id="KW-0539">Nucleus</keyword>
<keyword id="KW-1185">Reference proteome</keyword>
<keyword id="KW-0804">Transcription</keyword>
<keyword id="KW-0805">Transcription regulation</keyword>